<reference key="1">
    <citation type="submission" date="2001-06" db="EMBL/GenBank/DDBJ databases">
        <title>Characterization of genomic DNA encoding mosquito cecropins.</title>
        <authorList>
            <person name="Sun D."/>
            <person name="Fallon A.M."/>
        </authorList>
    </citation>
    <scope>NUCLEOTIDE SEQUENCE [GENOMIC DNA]</scope>
</reference>
<sequence length="59" mass="6183">MNFNKLFAIVLLAALVLLGQTEAGGLKKFGKKLEGVGKRVFKASEKALPVAVGIKALGK</sequence>
<organism>
    <name type="scientific">Aedes albopictus</name>
    <name type="common">Asian tiger mosquito</name>
    <name type="synonym">Stegomyia albopicta</name>
    <dbReference type="NCBI Taxonomy" id="7160"/>
    <lineage>
        <taxon>Eukaryota</taxon>
        <taxon>Metazoa</taxon>
        <taxon>Ecdysozoa</taxon>
        <taxon>Arthropoda</taxon>
        <taxon>Hexapoda</taxon>
        <taxon>Insecta</taxon>
        <taxon>Pterygota</taxon>
        <taxon>Neoptera</taxon>
        <taxon>Endopterygota</taxon>
        <taxon>Diptera</taxon>
        <taxon>Nematocera</taxon>
        <taxon>Culicoidea</taxon>
        <taxon>Culicidae</taxon>
        <taxon>Culicinae</taxon>
        <taxon>Aedini</taxon>
        <taxon>Aedes</taxon>
        <taxon>Stegomyia</taxon>
    </lineage>
</organism>
<protein>
    <recommendedName>
        <fullName>Cecropin-A2</fullName>
    </recommendedName>
</protein>
<accession>Q963B0</accession>
<comment type="function">
    <text evidence="1">Cecropins have lytic and antibacterial activity against several Gram-positive and Gram-negative bacteria.</text>
</comment>
<comment type="subcellular location">
    <subcellularLocation>
        <location evidence="1">Secreted</location>
    </subcellularLocation>
</comment>
<comment type="similarity">
    <text evidence="2">Belongs to the cecropin family.</text>
</comment>
<keyword id="KW-0044">Antibiotic</keyword>
<keyword id="KW-0929">Antimicrobial</keyword>
<keyword id="KW-0391">Immunity</keyword>
<keyword id="KW-0399">Innate immunity</keyword>
<keyword id="KW-0964">Secreted</keyword>
<keyword id="KW-0732">Signal</keyword>
<dbReference type="EMBL" id="AF394745">
    <property type="protein sequence ID" value="AAK81850.1"/>
    <property type="molecule type" value="Genomic_DNA"/>
</dbReference>
<dbReference type="SMR" id="Q963B0"/>
<dbReference type="EnsemblMetazoa" id="AALF000656-RA">
    <property type="protein sequence ID" value="AALF000656-PA"/>
    <property type="gene ID" value="AALF000656"/>
</dbReference>
<dbReference type="VEuPathDB" id="VectorBase:AALF000656"/>
<dbReference type="Proteomes" id="UP000069940">
    <property type="component" value="Unassembled WGS sequence"/>
</dbReference>
<dbReference type="GO" id="GO:0005615">
    <property type="term" value="C:extracellular space"/>
    <property type="evidence" value="ECO:0007669"/>
    <property type="project" value="TreeGrafter"/>
</dbReference>
<dbReference type="GO" id="GO:0019731">
    <property type="term" value="P:antibacterial humoral response"/>
    <property type="evidence" value="ECO:0007669"/>
    <property type="project" value="InterPro"/>
</dbReference>
<dbReference type="GO" id="GO:0050829">
    <property type="term" value="P:defense response to Gram-negative bacterium"/>
    <property type="evidence" value="ECO:0007669"/>
    <property type="project" value="UniProtKB-ARBA"/>
</dbReference>
<dbReference type="GO" id="GO:0050830">
    <property type="term" value="P:defense response to Gram-positive bacterium"/>
    <property type="evidence" value="ECO:0007669"/>
    <property type="project" value="TreeGrafter"/>
</dbReference>
<dbReference type="GO" id="GO:0045087">
    <property type="term" value="P:innate immune response"/>
    <property type="evidence" value="ECO:0007669"/>
    <property type="project" value="UniProtKB-KW"/>
</dbReference>
<dbReference type="InterPro" id="IPR000875">
    <property type="entry name" value="Cecropin"/>
</dbReference>
<dbReference type="InterPro" id="IPR020400">
    <property type="entry name" value="Cecropin_insect"/>
</dbReference>
<dbReference type="PANTHER" id="PTHR38329">
    <property type="entry name" value="CECROPIN-A1-RELATED"/>
    <property type="match status" value="1"/>
</dbReference>
<dbReference type="PANTHER" id="PTHR38329:SF1">
    <property type="entry name" value="CECROPIN-A1-RELATED"/>
    <property type="match status" value="1"/>
</dbReference>
<dbReference type="Pfam" id="PF00272">
    <property type="entry name" value="Cecropin"/>
    <property type="match status" value="1"/>
</dbReference>
<proteinExistence type="inferred from homology"/>
<evidence type="ECO:0000250" key="1"/>
<evidence type="ECO:0000305" key="2"/>
<gene>
    <name type="primary">CECA2</name>
</gene>
<name>CECA2_AEDAL</name>
<feature type="signal peptide" evidence="1">
    <location>
        <begin position="1"/>
        <end position="23"/>
    </location>
</feature>
<feature type="chain" id="PRO_0000004813" description="Cecropin-A2">
    <location>
        <begin position="24"/>
        <end position="58"/>
    </location>
</feature>